<name>UREF2_BRUSI</name>
<sequence>MTMRTATITEFSSSYRSLPGLLHLLQFGDSALPIGGFSFSNGLESAIQQNLVHDKETLREFTLTAMNQAATSDGIALLTAHRAARADDRGALQVIDKAVFERKLNEETRLMTVRMGRKLCELSASIIDDRLNRDWLECIKTAETPGTHPVSLGLAFVALDVDGRDAFGAQQYGVATTILGAALRLMRVSFMDTQKILLEATSTVAPAYEEIADAGIEDMASFAPMVDILAAVHVKGHVRMFMN</sequence>
<protein>
    <recommendedName>
        <fullName evidence="1">Urease accessory protein UreF 2</fullName>
    </recommendedName>
</protein>
<organism>
    <name type="scientific">Brucella suis (strain ATCC 23445 / NCTC 10510)</name>
    <dbReference type="NCBI Taxonomy" id="470137"/>
    <lineage>
        <taxon>Bacteria</taxon>
        <taxon>Pseudomonadati</taxon>
        <taxon>Pseudomonadota</taxon>
        <taxon>Alphaproteobacteria</taxon>
        <taxon>Hyphomicrobiales</taxon>
        <taxon>Brucellaceae</taxon>
        <taxon>Brucella/Ochrobactrum group</taxon>
        <taxon>Brucella</taxon>
    </lineage>
</organism>
<feature type="chain" id="PRO_0000344095" description="Urease accessory protein UreF 2">
    <location>
        <begin position="1"/>
        <end position="243"/>
    </location>
</feature>
<dbReference type="EMBL" id="CP000911">
    <property type="protein sequence ID" value="ABY38452.1"/>
    <property type="molecule type" value="Genomic_DNA"/>
</dbReference>
<dbReference type="RefSeq" id="WP_006071063.1">
    <property type="nucleotide sequence ID" value="NC_010169.1"/>
</dbReference>
<dbReference type="SMR" id="B0CHF1"/>
<dbReference type="KEGG" id="bmt:BSUIS_A1411"/>
<dbReference type="HOGENOM" id="CLU_049215_4_0_5"/>
<dbReference type="Proteomes" id="UP000008545">
    <property type="component" value="Chromosome I"/>
</dbReference>
<dbReference type="GO" id="GO:0005737">
    <property type="term" value="C:cytoplasm"/>
    <property type="evidence" value="ECO:0007669"/>
    <property type="project" value="UniProtKB-SubCell"/>
</dbReference>
<dbReference type="GO" id="GO:0016151">
    <property type="term" value="F:nickel cation binding"/>
    <property type="evidence" value="ECO:0007669"/>
    <property type="project" value="UniProtKB-UniRule"/>
</dbReference>
<dbReference type="Gene3D" id="1.10.4190.10">
    <property type="entry name" value="Urease accessory protein UreF"/>
    <property type="match status" value="1"/>
</dbReference>
<dbReference type="HAMAP" id="MF_01385">
    <property type="entry name" value="UreF"/>
    <property type="match status" value="1"/>
</dbReference>
<dbReference type="InterPro" id="IPR002639">
    <property type="entry name" value="UreF"/>
</dbReference>
<dbReference type="InterPro" id="IPR038277">
    <property type="entry name" value="UreF_sf"/>
</dbReference>
<dbReference type="PANTHER" id="PTHR33620">
    <property type="entry name" value="UREASE ACCESSORY PROTEIN F"/>
    <property type="match status" value="1"/>
</dbReference>
<dbReference type="PANTHER" id="PTHR33620:SF1">
    <property type="entry name" value="UREASE ACCESSORY PROTEIN F"/>
    <property type="match status" value="1"/>
</dbReference>
<dbReference type="Pfam" id="PF01730">
    <property type="entry name" value="UreF"/>
    <property type="match status" value="1"/>
</dbReference>
<dbReference type="PIRSF" id="PIRSF009467">
    <property type="entry name" value="Ureas_acces_UreF"/>
    <property type="match status" value="1"/>
</dbReference>
<gene>
    <name evidence="1" type="primary">ureF2</name>
    <name type="ordered locus">BSUIS_A1411</name>
</gene>
<accession>B0CHF1</accession>
<evidence type="ECO:0000255" key="1">
    <source>
        <dbReference type="HAMAP-Rule" id="MF_01385"/>
    </source>
</evidence>
<reference key="1">
    <citation type="submission" date="2007-12" db="EMBL/GenBank/DDBJ databases">
        <title>Brucella suis ATCC 23445 whole genome shotgun sequencing project.</title>
        <authorList>
            <person name="Setubal J.C."/>
            <person name="Bowns C."/>
            <person name="Boyle S."/>
            <person name="Crasta O.R."/>
            <person name="Czar M.J."/>
            <person name="Dharmanolla C."/>
            <person name="Gillespie J.J."/>
            <person name="Kenyon R.W."/>
            <person name="Lu J."/>
            <person name="Mane S."/>
            <person name="Mohapatra S."/>
            <person name="Nagrani S."/>
            <person name="Purkayastha A."/>
            <person name="Rajasimha H.K."/>
            <person name="Shallom J.M."/>
            <person name="Shallom S."/>
            <person name="Shukla M."/>
            <person name="Snyder E.E."/>
            <person name="Sobral B.W."/>
            <person name="Wattam A.R."/>
            <person name="Will R."/>
            <person name="Williams K."/>
            <person name="Yoo H."/>
            <person name="Bruce D."/>
            <person name="Detter C."/>
            <person name="Munk C."/>
            <person name="Brettin T.S."/>
        </authorList>
    </citation>
    <scope>NUCLEOTIDE SEQUENCE [LARGE SCALE GENOMIC DNA]</scope>
    <source>
        <strain>ATCC 23445 / NCTC 10510</strain>
    </source>
</reference>
<keyword id="KW-0143">Chaperone</keyword>
<keyword id="KW-0963">Cytoplasm</keyword>
<keyword id="KW-0996">Nickel insertion</keyword>
<comment type="function">
    <text evidence="1">Required for maturation of urease via the functional incorporation of the urease nickel metallocenter.</text>
</comment>
<comment type="subunit">
    <text evidence="1">UreD, UreF and UreG form a complex that acts as a GTP-hydrolysis-dependent molecular chaperone, activating the urease apoprotein by helping to assemble the nickel containing metallocenter of UreC. The UreE protein probably delivers the nickel.</text>
</comment>
<comment type="subcellular location">
    <subcellularLocation>
        <location evidence="1">Cytoplasm</location>
    </subcellularLocation>
</comment>
<comment type="similarity">
    <text evidence="1">Belongs to the UreF family.</text>
</comment>
<proteinExistence type="inferred from homology"/>